<organism>
    <name type="scientific">Bacillus subtilis (strain 168)</name>
    <dbReference type="NCBI Taxonomy" id="224308"/>
    <lineage>
        <taxon>Bacteria</taxon>
        <taxon>Bacillati</taxon>
        <taxon>Bacillota</taxon>
        <taxon>Bacilli</taxon>
        <taxon>Bacillales</taxon>
        <taxon>Bacillaceae</taxon>
        <taxon>Bacillus</taxon>
    </lineage>
</organism>
<keyword id="KW-1185">Reference proteome</keyword>
<sequence>MKYDKDRVKESLTIEDIHKILKDLGSENNLWDQQGNPIYRTVCHNASGGSYKLYYYHEAKQFHCYTECGDNFDVFELVIRAKSQKGINISFNQAIEYVAKIAGRTFGFGNRETYINNDLIDDWEWMGKFKKKKKIHIELPSFNETVLDVFVPYPHQLWLGEGISHKTLKEFEIGYYFRPHTEGITIPHRDLNNRLIGIRRRSMIKEEVDAGYKYMPLKVGNILYNHQTMMNLYGLHKTKNSIERFKKVLIFESEKSVLKCQDFYGESNFTCAVCSSNISNFHRDILLSLGVEEVFIALDKYRPPKEHETEEKYQEKLVEYQKKILKLAAKFTPYVRVYVLWDYEGLLDYKDSPADKGKETLEELMRRKIEIGTDEGGI</sequence>
<accession>O31904</accession>
<gene>
    <name type="primary">yorJ</name>
    <name type="ordered locus">BSU20360</name>
</gene>
<protein>
    <recommendedName>
        <fullName>SPbeta prophage-derived uncharacterized protein YorJ</fullName>
    </recommendedName>
</protein>
<reference key="1">
    <citation type="journal article" date="1997" name="Nature">
        <title>The complete genome sequence of the Gram-positive bacterium Bacillus subtilis.</title>
        <authorList>
            <person name="Kunst F."/>
            <person name="Ogasawara N."/>
            <person name="Moszer I."/>
            <person name="Albertini A.M."/>
            <person name="Alloni G."/>
            <person name="Azevedo V."/>
            <person name="Bertero M.G."/>
            <person name="Bessieres P."/>
            <person name="Bolotin A."/>
            <person name="Borchert S."/>
            <person name="Borriss R."/>
            <person name="Boursier L."/>
            <person name="Brans A."/>
            <person name="Braun M."/>
            <person name="Brignell S.C."/>
            <person name="Bron S."/>
            <person name="Brouillet S."/>
            <person name="Bruschi C.V."/>
            <person name="Caldwell B."/>
            <person name="Capuano V."/>
            <person name="Carter N.M."/>
            <person name="Choi S.-K."/>
            <person name="Codani J.-J."/>
            <person name="Connerton I.F."/>
            <person name="Cummings N.J."/>
            <person name="Daniel R.A."/>
            <person name="Denizot F."/>
            <person name="Devine K.M."/>
            <person name="Duesterhoeft A."/>
            <person name="Ehrlich S.D."/>
            <person name="Emmerson P.T."/>
            <person name="Entian K.-D."/>
            <person name="Errington J."/>
            <person name="Fabret C."/>
            <person name="Ferrari E."/>
            <person name="Foulger D."/>
            <person name="Fritz C."/>
            <person name="Fujita M."/>
            <person name="Fujita Y."/>
            <person name="Fuma S."/>
            <person name="Galizzi A."/>
            <person name="Galleron N."/>
            <person name="Ghim S.-Y."/>
            <person name="Glaser P."/>
            <person name="Goffeau A."/>
            <person name="Golightly E.J."/>
            <person name="Grandi G."/>
            <person name="Guiseppi G."/>
            <person name="Guy B.J."/>
            <person name="Haga K."/>
            <person name="Haiech J."/>
            <person name="Harwood C.R."/>
            <person name="Henaut A."/>
            <person name="Hilbert H."/>
            <person name="Holsappel S."/>
            <person name="Hosono S."/>
            <person name="Hullo M.-F."/>
            <person name="Itaya M."/>
            <person name="Jones L.-M."/>
            <person name="Joris B."/>
            <person name="Karamata D."/>
            <person name="Kasahara Y."/>
            <person name="Klaerr-Blanchard M."/>
            <person name="Klein C."/>
            <person name="Kobayashi Y."/>
            <person name="Koetter P."/>
            <person name="Koningstein G."/>
            <person name="Krogh S."/>
            <person name="Kumano M."/>
            <person name="Kurita K."/>
            <person name="Lapidus A."/>
            <person name="Lardinois S."/>
            <person name="Lauber J."/>
            <person name="Lazarevic V."/>
            <person name="Lee S.-M."/>
            <person name="Levine A."/>
            <person name="Liu H."/>
            <person name="Masuda S."/>
            <person name="Mauel C."/>
            <person name="Medigue C."/>
            <person name="Medina N."/>
            <person name="Mellado R.P."/>
            <person name="Mizuno M."/>
            <person name="Moestl D."/>
            <person name="Nakai S."/>
            <person name="Noback M."/>
            <person name="Noone D."/>
            <person name="O'Reilly M."/>
            <person name="Ogawa K."/>
            <person name="Ogiwara A."/>
            <person name="Oudega B."/>
            <person name="Park S.-H."/>
            <person name="Parro V."/>
            <person name="Pohl T.M."/>
            <person name="Portetelle D."/>
            <person name="Porwollik S."/>
            <person name="Prescott A.M."/>
            <person name="Presecan E."/>
            <person name="Pujic P."/>
            <person name="Purnelle B."/>
            <person name="Rapoport G."/>
            <person name="Rey M."/>
            <person name="Reynolds S."/>
            <person name="Rieger M."/>
            <person name="Rivolta C."/>
            <person name="Rocha E."/>
            <person name="Roche B."/>
            <person name="Rose M."/>
            <person name="Sadaie Y."/>
            <person name="Sato T."/>
            <person name="Scanlan E."/>
            <person name="Schleich S."/>
            <person name="Schroeter R."/>
            <person name="Scoffone F."/>
            <person name="Sekiguchi J."/>
            <person name="Sekowska A."/>
            <person name="Seror S.J."/>
            <person name="Serror P."/>
            <person name="Shin B.-S."/>
            <person name="Soldo B."/>
            <person name="Sorokin A."/>
            <person name="Tacconi E."/>
            <person name="Takagi T."/>
            <person name="Takahashi H."/>
            <person name="Takemaru K."/>
            <person name="Takeuchi M."/>
            <person name="Tamakoshi A."/>
            <person name="Tanaka T."/>
            <person name="Terpstra P."/>
            <person name="Tognoni A."/>
            <person name="Tosato V."/>
            <person name="Uchiyama S."/>
            <person name="Vandenbol M."/>
            <person name="Vannier F."/>
            <person name="Vassarotti A."/>
            <person name="Viari A."/>
            <person name="Wambutt R."/>
            <person name="Wedler E."/>
            <person name="Wedler H."/>
            <person name="Weitzenegger T."/>
            <person name="Winters P."/>
            <person name="Wipat A."/>
            <person name="Yamamoto H."/>
            <person name="Yamane K."/>
            <person name="Yasumoto K."/>
            <person name="Yata K."/>
            <person name="Yoshida K."/>
            <person name="Yoshikawa H.-F."/>
            <person name="Zumstein E."/>
            <person name="Yoshikawa H."/>
            <person name="Danchin A."/>
        </authorList>
    </citation>
    <scope>NUCLEOTIDE SEQUENCE [LARGE SCALE GENOMIC DNA]</scope>
    <source>
        <strain>168</strain>
    </source>
</reference>
<proteinExistence type="predicted"/>
<name>YORJ_BACSU</name>
<dbReference type="EMBL" id="AL009126">
    <property type="protein sequence ID" value="CAB13928.1"/>
    <property type="molecule type" value="Genomic_DNA"/>
</dbReference>
<dbReference type="RefSeq" id="NP_389918.1">
    <property type="nucleotide sequence ID" value="NC_000964.3"/>
</dbReference>
<dbReference type="RefSeq" id="WP_009967477.1">
    <property type="nucleotide sequence ID" value="NZ_OZ025638.1"/>
</dbReference>
<dbReference type="SMR" id="O31904"/>
<dbReference type="FunCoup" id="O31904">
    <property type="interactions" value="96"/>
</dbReference>
<dbReference type="STRING" id="224308.BSU20360"/>
<dbReference type="PaxDb" id="224308-BSU20360"/>
<dbReference type="EnsemblBacteria" id="CAB13928">
    <property type="protein sequence ID" value="CAB13928"/>
    <property type="gene ID" value="BSU_20360"/>
</dbReference>
<dbReference type="GeneID" id="939584"/>
<dbReference type="KEGG" id="bsu:BSU20360"/>
<dbReference type="PATRIC" id="fig|224308.179.peg.2226"/>
<dbReference type="eggNOG" id="COG0358">
    <property type="taxonomic scope" value="Bacteria"/>
</dbReference>
<dbReference type="InParanoid" id="O31904"/>
<dbReference type="OrthoDB" id="2327166at2"/>
<dbReference type="BioCyc" id="BSUB:BSU20360-MONOMER"/>
<dbReference type="Proteomes" id="UP000001570">
    <property type="component" value="Chromosome"/>
</dbReference>
<dbReference type="GO" id="GO:0003677">
    <property type="term" value="F:DNA binding"/>
    <property type="evidence" value="ECO:0007669"/>
    <property type="project" value="InterPro"/>
</dbReference>
<dbReference type="GO" id="GO:0008270">
    <property type="term" value="F:zinc ion binding"/>
    <property type="evidence" value="ECO:0007669"/>
    <property type="project" value="InterPro"/>
</dbReference>
<dbReference type="GO" id="GO:0006260">
    <property type="term" value="P:DNA replication"/>
    <property type="evidence" value="ECO:0007669"/>
    <property type="project" value="InterPro"/>
</dbReference>
<dbReference type="Gene3D" id="3.40.1360.10">
    <property type="match status" value="1"/>
</dbReference>
<dbReference type="Gene3D" id="3.90.580.10">
    <property type="entry name" value="Zinc finger, CHC2-type domain"/>
    <property type="match status" value="1"/>
</dbReference>
<dbReference type="InterPro" id="IPR036977">
    <property type="entry name" value="DNA_primase_Znf_CHC2"/>
</dbReference>
<dbReference type="InterPro" id="IPR016622">
    <property type="entry name" value="Phage_SP-beta_YorJ"/>
</dbReference>
<dbReference type="NCBIfam" id="NF006382">
    <property type="entry name" value="PRK08624.1"/>
    <property type="match status" value="1"/>
</dbReference>
<dbReference type="PIRSF" id="PIRSF014669">
    <property type="entry name" value="UCP014669"/>
    <property type="match status" value="1"/>
</dbReference>
<dbReference type="SUPFAM" id="SSF56731">
    <property type="entry name" value="DNA primase core"/>
    <property type="match status" value="1"/>
</dbReference>
<dbReference type="SUPFAM" id="SSF57783">
    <property type="entry name" value="Zinc beta-ribbon"/>
    <property type="match status" value="1"/>
</dbReference>
<feature type="chain" id="PRO_0000359910" description="SPbeta prophage-derived uncharacterized protein YorJ">
    <location>
        <begin position="1"/>
        <end position="378"/>
    </location>
</feature>